<gene>
    <name type="primary">RP1</name>
</gene>
<feature type="chain" id="PRO_0000097409" description="Oxygen-regulated protein 1">
    <location>
        <begin position="1"/>
        <end position="2141"/>
    </location>
</feature>
<feature type="domain" description="Doublecortin 1" evidence="2">
    <location>
        <begin position="34"/>
        <end position="116"/>
    </location>
</feature>
<feature type="domain" description="Doublecortin 2" evidence="2">
    <location>
        <begin position="156"/>
        <end position="235"/>
    </location>
</feature>
<feature type="region of interest" description="Disordered" evidence="3">
    <location>
        <begin position="1"/>
        <end position="20"/>
    </location>
</feature>
<feature type="region of interest" description="Disordered" evidence="3">
    <location>
        <begin position="126"/>
        <end position="149"/>
    </location>
</feature>
<feature type="region of interest" description="Disordered" evidence="3">
    <location>
        <begin position="259"/>
        <end position="278"/>
    </location>
</feature>
<feature type="region of interest" description="Disordered" evidence="3">
    <location>
        <begin position="1432"/>
        <end position="1458"/>
    </location>
</feature>
<feature type="region of interest" description="Disordered" evidence="3">
    <location>
        <begin position="1589"/>
        <end position="1612"/>
    </location>
</feature>
<feature type="compositionally biased region" description="Polar residues" evidence="3">
    <location>
        <begin position="1"/>
        <end position="10"/>
    </location>
</feature>
<feature type="compositionally biased region" description="Polar residues" evidence="3">
    <location>
        <begin position="268"/>
        <end position="278"/>
    </location>
</feature>
<feature type="compositionally biased region" description="Basic and acidic residues" evidence="3">
    <location>
        <begin position="1435"/>
        <end position="1444"/>
    </location>
</feature>
<feature type="compositionally biased region" description="Polar residues" evidence="3">
    <location>
        <begin position="1448"/>
        <end position="1458"/>
    </location>
</feature>
<feature type="compositionally biased region" description="Polar residues" evidence="3">
    <location>
        <begin position="1598"/>
        <end position="1610"/>
    </location>
</feature>
<comment type="function">
    <text evidence="1">Microtubule-associated protein regulating the stability and length of the microtubule-based axoneme of photoreceptors. Required for the differentiation of photoreceptor cells, it plays a role in the organization of the outer segment of rod and cone photoreceptors ensuring the correct orientation and higher-order stacking of outer segment disks along the photoreceptor axoneme (By similarity).</text>
</comment>
<comment type="subunit">
    <text evidence="1">Interacts (via the doublecortin domains) with microtubules. Interacts with RP1L1 (By similarity). Interacts with MAK (By similarity).</text>
</comment>
<comment type="subcellular location">
    <subcellularLocation>
        <location evidence="1">Cytoplasm</location>
        <location evidence="1">Cytoskeleton</location>
        <location evidence="1">Cilium axoneme</location>
    </subcellularLocation>
    <subcellularLocation>
        <location evidence="1">Cell projection</location>
        <location evidence="1">Cilium</location>
        <location evidence="1">Photoreceptor outer segment</location>
    </subcellularLocation>
    <text evidence="1">Specifically localized in the connecting cilia of rod and cone photoreceptors.</text>
</comment>
<comment type="domain">
    <text evidence="1">The doublecortin domains, which mediate interaction with microtubules, are required for regulation of microtubule polymerization and function in photoreceptor differentiation.</text>
</comment>
<dbReference type="EMBL" id="AY034786">
    <property type="protein sequence ID" value="AAK58443.1"/>
    <property type="molecule type" value="mRNA"/>
</dbReference>
<dbReference type="SMR" id="Q8MJ04"/>
<dbReference type="FunCoup" id="Q8MJ04">
    <property type="interactions" value="8"/>
</dbReference>
<dbReference type="STRING" id="9615.ENSCAFP00000010380"/>
<dbReference type="PaxDb" id="9612-ENSCAFP00000010380"/>
<dbReference type="eggNOG" id="KOG1181">
    <property type="taxonomic scope" value="Eukaryota"/>
</dbReference>
<dbReference type="eggNOG" id="KOG3757">
    <property type="taxonomic scope" value="Eukaryota"/>
</dbReference>
<dbReference type="InParanoid" id="Q8MJ04"/>
<dbReference type="OrthoDB" id="1738954at2759"/>
<dbReference type="Proteomes" id="UP000002254">
    <property type="component" value="Unplaced"/>
</dbReference>
<dbReference type="Proteomes" id="UP000694429">
    <property type="component" value="Unplaced"/>
</dbReference>
<dbReference type="Proteomes" id="UP000694542">
    <property type="component" value="Unplaced"/>
</dbReference>
<dbReference type="Proteomes" id="UP000805418">
    <property type="component" value="Unplaced"/>
</dbReference>
<dbReference type="GO" id="GO:0005930">
    <property type="term" value="C:axoneme"/>
    <property type="evidence" value="ECO:0000318"/>
    <property type="project" value="GO_Central"/>
</dbReference>
<dbReference type="GO" id="GO:0005875">
    <property type="term" value="C:microtubule associated complex"/>
    <property type="evidence" value="ECO:0000250"/>
    <property type="project" value="UniProtKB"/>
</dbReference>
<dbReference type="GO" id="GO:0001750">
    <property type="term" value="C:photoreceptor outer segment"/>
    <property type="evidence" value="ECO:0000250"/>
    <property type="project" value="UniProtKB"/>
</dbReference>
<dbReference type="GO" id="GO:0008017">
    <property type="term" value="F:microtubule binding"/>
    <property type="evidence" value="ECO:0000250"/>
    <property type="project" value="UniProtKB"/>
</dbReference>
<dbReference type="GO" id="GO:0035082">
    <property type="term" value="P:axoneme assembly"/>
    <property type="evidence" value="ECO:0000250"/>
    <property type="project" value="UniProtKB"/>
</dbReference>
<dbReference type="GO" id="GO:0035556">
    <property type="term" value="P:intracellular signal transduction"/>
    <property type="evidence" value="ECO:0007669"/>
    <property type="project" value="InterPro"/>
</dbReference>
<dbReference type="GO" id="GO:0042461">
    <property type="term" value="P:photoreceptor cell development"/>
    <property type="evidence" value="ECO:0000250"/>
    <property type="project" value="UniProtKB"/>
</dbReference>
<dbReference type="GO" id="GO:0045494">
    <property type="term" value="P:photoreceptor cell maintenance"/>
    <property type="evidence" value="ECO:0000250"/>
    <property type="project" value="UniProtKB"/>
</dbReference>
<dbReference type="GO" id="GO:0035845">
    <property type="term" value="P:photoreceptor cell outer segment organization"/>
    <property type="evidence" value="ECO:0000250"/>
    <property type="project" value="UniProtKB"/>
</dbReference>
<dbReference type="GO" id="GO:0060041">
    <property type="term" value="P:retina development in camera-type eye"/>
    <property type="evidence" value="ECO:0000318"/>
    <property type="project" value="GO_Central"/>
</dbReference>
<dbReference type="GO" id="GO:0046549">
    <property type="term" value="P:retinal cone cell development"/>
    <property type="evidence" value="ECO:0000250"/>
    <property type="project" value="UniProtKB"/>
</dbReference>
<dbReference type="GO" id="GO:0046548">
    <property type="term" value="P:retinal rod cell development"/>
    <property type="evidence" value="ECO:0000250"/>
    <property type="project" value="UniProtKB"/>
</dbReference>
<dbReference type="GO" id="GO:0007601">
    <property type="term" value="P:visual perception"/>
    <property type="evidence" value="ECO:0007669"/>
    <property type="project" value="UniProtKB-KW"/>
</dbReference>
<dbReference type="FunFam" id="3.10.20.230:FF:000006">
    <property type="entry name" value="Oxygen-regulated protein 1"/>
    <property type="match status" value="1"/>
</dbReference>
<dbReference type="FunFam" id="3.10.20.230:FF:000007">
    <property type="entry name" value="Oxygen-regulated protein 1"/>
    <property type="match status" value="1"/>
</dbReference>
<dbReference type="Gene3D" id="3.10.20.230">
    <property type="entry name" value="Doublecortin domain"/>
    <property type="match status" value="2"/>
</dbReference>
<dbReference type="InterPro" id="IPR003533">
    <property type="entry name" value="Doublecortin_dom"/>
</dbReference>
<dbReference type="InterPro" id="IPR036572">
    <property type="entry name" value="Doublecortin_dom_sf"/>
</dbReference>
<dbReference type="PANTHER" id="PTHR23005:SF4">
    <property type="entry name" value="OXYGEN-REGULATED PROTEIN 1"/>
    <property type="match status" value="1"/>
</dbReference>
<dbReference type="PANTHER" id="PTHR23005">
    <property type="entry name" value="RETINITIS PIGMENTOSA 1 PROTEIN"/>
    <property type="match status" value="1"/>
</dbReference>
<dbReference type="Pfam" id="PF03607">
    <property type="entry name" value="DCX"/>
    <property type="match status" value="2"/>
</dbReference>
<dbReference type="SMART" id="SM00537">
    <property type="entry name" value="DCX"/>
    <property type="match status" value="2"/>
</dbReference>
<dbReference type="SUPFAM" id="SSF89837">
    <property type="entry name" value="Doublecortin (DC)"/>
    <property type="match status" value="2"/>
</dbReference>
<dbReference type="PROSITE" id="PS50309">
    <property type="entry name" value="DC"/>
    <property type="match status" value="2"/>
</dbReference>
<accession>Q8MJ04</accession>
<protein>
    <recommendedName>
        <fullName>Oxygen-regulated protein 1</fullName>
    </recommendedName>
    <alternativeName>
        <fullName>Retinitis pigmentosa RP1 protein homolog</fullName>
    </alternativeName>
</protein>
<sequence length="2141" mass="240096">MSETSSTSVSMIHRSFEGQGPPRHLSVMHPVVAKKISFYKSGDPQFGGVKVVVNPRSFKTFDALLDNLSRKVPLPFGVRNISTPRGRHSITRLEELEDGASYLCSHRRKVQPVDLDKARRRPRPWLSSRAISAHAQRSPPTSIGAAGAPGMLRAPRRLLVFRNGDPKIRRVVIVNRRVTQSFQAFLQHLTEVMRFPVTKLYATDGRKVPSLQAVILSSGAVVAAGREPFKPGNYDIQKYLLSARLPGTSHHVYIKGNTRSESRKMSTHVPSSPRSQIYSVSSGKMHNNDCYSDHSFASENYLALEKNDSRNLLIYPSEDDIEKSIIFNQDGTMTVEMKVRFKIKEEETIKWTTVSRASLSHNNEKCEVGCFPGRTDDQSSHLKIAACSLSADVSSLEKDNNQEVSLTEEINTRITDQETETCTSVSWENGAMDTNICTRVTQDQAKHHFYRPPTPGPKRVRQKSVRGSVTLVSETEVEEEMIRQFSYSEAREDGENKSEYHMFTHSCSKMSSVSNKPLLVQINNNEQMESSLERKKESRLLKSGAIRAGVEITNQKMLEMSHNNGSPQTISENSIVGEVIVDSLTSDNKTNIKILRPYSRTRDRFSPILADTTHSLSNDSGIDKTVSEIPALVESSTVTTRIDRLINEFAQCDLTNSANEKQTSLSVASKKKMKSQQQVINSRHQIRKIATKGILSKNKRINTGRRIAQEIILEGSDGSLKGGVVCEEDLHVSDTVIESNYCSQSDLNPVNSKNFHVNKLNTLQNPKKFQGLLAKRKSRPLTKVSLGGPTKREIGQGDKVFPHNDFRYCKNNFEDQNLFPMFNFLEQRPSDFCGPQGQAEIASWYLGGITKKNLVSKVNNSHITLKTQKKQKGDKLKSSTTVSKQQVTTRANSLGSLKKAVFPEAISHHSVQNYIQRWLQNTNPHSALQSRKSAPIYKKDRSVVSCNNNGFAGTKSHTSSGEGNNFARESNKYITKNASLTENLGKKVGKFFDKVNSEELSKDLCENQVESLNDACLLPLHENCALSQSAIDDHNTKIQVCAEKLGPEISLVYQEINVATKRHSVEAAIQVDLTEEDTSKDPLPILLLRQLQALVPSIHKTQNGITQMPGSLADIPFSSPICKSYTNVLLAWLLVLTLKGSINSFCQGDAHKTTNRASEILGLLEVLRHTAITEEADDLKAAVANLVESTTNHFGLTEKEQDMVPVGLSANCSTPNLHRVPKCVENEKTQKISSGGGHSASEHCGPEACVSELTCSCQMCIVNKTCPPKETCNLSDIFCPSDGCTVDQTPMNKACFQGEVCSLTDALSSHRACAHEENHSRKATCPIDEAYIPNKICNTSDFLIFKENTCTDNLELTEELERINKVQKDLNVLADPGCKHSFNILVSDQNISNLSYSSFPINETEPEFDKERSSVAELKNYSLKTFQGKNAYTSSDKEDSKTSEEPGSITNSMTSSERNISELESFEELENQDTDTFHMKVNAREQAAEELIQKELEASKNLQLIDGSRRNITEEEERNGIICEAIRRRLATPPSLVFCYDSKQNTEKDLNEGETKMRVKMMVKSVEIGSYSESSLDFKNDFIGPVTSDWSEFRPSSENEQPYKTSSDGPNGSCEEIVQDKDYNKGFVKRTIEKLYSKGEIIKPSFFSGSIHRSQVCPYNSVEFQCARKVDLYDCEGQSFGSSEQLSSNSSMLQKFLEEGQDKCDFNDVRANYHGGDILGHGTKQNDHNRIIRDIEEGVLIDKGKWLLKENHLLRISSPENSGLYGNADTISVDTLLNNDNEVPYSHFGNLAPDPTMAELSSSELEELSQPLELKCSYFNMPHCSDSEPFCEDLLDVQNKTCARERIPVHHAEEKANHKSERVCTSVTHGFTSAGNKVHPVSDDTIKNQPLPVNNAIHGALQEGDSLDKLYAICGQHCPILTVIIQPINEEDRGFAYCKNSDIENFLGLHLWMKVHPYLLPSNKTIFRDANNKANGRKAFIDNAFDDTFDLMDKRKLRNLKGISSLGLEEENNLKKFQLYLKKKFCVNFLHTSLLIVDNRNSDTRDSINQTNEIFEVVDENNNFLNSRFQNSRTNLNQVVRECSDFFFEMHGQTCLFYQVETSLNISNRNTVEIFYVFEDENLFIWEEESQFDLESNDEDL</sequence>
<name>RP1_CANLF</name>
<proteinExistence type="evidence at transcript level"/>
<evidence type="ECO:0000250" key="1"/>
<evidence type="ECO:0000255" key="2">
    <source>
        <dbReference type="PROSITE-ProRule" id="PRU00072"/>
    </source>
</evidence>
<evidence type="ECO:0000256" key="3">
    <source>
        <dbReference type="SAM" id="MobiDB-lite"/>
    </source>
</evidence>
<reference key="1">
    <citation type="submission" date="2001-05" db="EMBL/GenBank/DDBJ databases">
        <title>Comparative sequencing of RP1: a closer look at a highly divergent retina-specific protein.</title>
        <authorList>
            <person name="Malone K.A."/>
        </authorList>
    </citation>
    <scope>NUCLEOTIDE SEQUENCE [MRNA]</scope>
</reference>
<keyword id="KW-0966">Cell projection</keyword>
<keyword id="KW-0969">Cilium</keyword>
<keyword id="KW-0970">Cilium biogenesis/degradation</keyword>
<keyword id="KW-0963">Cytoplasm</keyword>
<keyword id="KW-0206">Cytoskeleton</keyword>
<keyword id="KW-1185">Reference proteome</keyword>
<keyword id="KW-0677">Repeat</keyword>
<keyword id="KW-0716">Sensory transduction</keyword>
<keyword id="KW-0844">Vision</keyword>
<organism>
    <name type="scientific">Canis lupus familiaris</name>
    <name type="common">Dog</name>
    <name type="synonym">Canis familiaris</name>
    <dbReference type="NCBI Taxonomy" id="9615"/>
    <lineage>
        <taxon>Eukaryota</taxon>
        <taxon>Metazoa</taxon>
        <taxon>Chordata</taxon>
        <taxon>Craniata</taxon>
        <taxon>Vertebrata</taxon>
        <taxon>Euteleostomi</taxon>
        <taxon>Mammalia</taxon>
        <taxon>Eutheria</taxon>
        <taxon>Laurasiatheria</taxon>
        <taxon>Carnivora</taxon>
        <taxon>Caniformia</taxon>
        <taxon>Canidae</taxon>
        <taxon>Canis</taxon>
    </lineage>
</organism>